<reference key="1">
    <citation type="journal article" date="2007" name="Proc. Natl. Acad. Sci. U.S.A.">
        <title>Genome sequencing reveals complex secondary metabolome in the marine actinomycete Salinispora tropica.</title>
        <authorList>
            <person name="Udwary D.W."/>
            <person name="Zeigler L."/>
            <person name="Asolkar R.N."/>
            <person name="Singan V."/>
            <person name="Lapidus A."/>
            <person name="Fenical W."/>
            <person name="Jensen P.R."/>
            <person name="Moore B.S."/>
        </authorList>
    </citation>
    <scope>NUCLEOTIDE SEQUENCE [LARGE SCALE GENOMIC DNA]</scope>
    <source>
        <strain>ATCC BAA-916 / DSM 44818 / JCM 13857 / NBRC 105044 / CNB-440</strain>
    </source>
</reference>
<protein>
    <recommendedName>
        <fullName evidence="1">Large ribosomal subunit protein uL5</fullName>
    </recommendedName>
    <alternativeName>
        <fullName evidence="2">50S ribosomal protein L5</fullName>
    </alternativeName>
</protein>
<keyword id="KW-1185">Reference proteome</keyword>
<keyword id="KW-0687">Ribonucleoprotein</keyword>
<keyword id="KW-0689">Ribosomal protein</keyword>
<keyword id="KW-0694">RNA-binding</keyword>
<keyword id="KW-0699">rRNA-binding</keyword>
<keyword id="KW-0820">tRNA-binding</keyword>
<name>RL5_SALTO</name>
<comment type="function">
    <text evidence="1">This is one of the proteins that bind and probably mediate the attachment of the 5S RNA into the large ribosomal subunit, where it forms part of the central protuberance. In the 70S ribosome it contacts protein S13 of the 30S subunit (bridge B1b), connecting the 2 subunits; this bridge is implicated in subunit movement. Contacts the P site tRNA; the 5S rRNA and some of its associated proteins might help stabilize positioning of ribosome-bound tRNAs.</text>
</comment>
<comment type="subunit">
    <text evidence="1">Part of the 50S ribosomal subunit; part of the 5S rRNA/L5/L18/L25 subcomplex. Contacts the 5S rRNA and the P site tRNA. Forms a bridge to the 30S subunit in the 70S ribosome.</text>
</comment>
<comment type="similarity">
    <text evidence="1">Belongs to the universal ribosomal protein uL5 family.</text>
</comment>
<gene>
    <name evidence="1" type="primary">rplE</name>
    <name type="ordered locus">Strop_3911</name>
</gene>
<feature type="chain" id="PRO_1000086606" description="Large ribosomal subunit protein uL5">
    <location>
        <begin position="1"/>
        <end position="189"/>
    </location>
</feature>
<dbReference type="EMBL" id="CP000667">
    <property type="protein sequence ID" value="ABP56341.1"/>
    <property type="molecule type" value="Genomic_DNA"/>
</dbReference>
<dbReference type="RefSeq" id="WP_012015115.1">
    <property type="nucleotide sequence ID" value="NC_009380.1"/>
</dbReference>
<dbReference type="SMR" id="A4XBN4"/>
<dbReference type="STRING" id="369723.Strop_3911"/>
<dbReference type="KEGG" id="stp:Strop_3911"/>
<dbReference type="PATRIC" id="fig|369723.5.peg.4037"/>
<dbReference type="eggNOG" id="COG0094">
    <property type="taxonomic scope" value="Bacteria"/>
</dbReference>
<dbReference type="HOGENOM" id="CLU_061015_2_1_11"/>
<dbReference type="Proteomes" id="UP000000235">
    <property type="component" value="Chromosome"/>
</dbReference>
<dbReference type="GO" id="GO:1990904">
    <property type="term" value="C:ribonucleoprotein complex"/>
    <property type="evidence" value="ECO:0007669"/>
    <property type="project" value="UniProtKB-KW"/>
</dbReference>
<dbReference type="GO" id="GO:0005840">
    <property type="term" value="C:ribosome"/>
    <property type="evidence" value="ECO:0007669"/>
    <property type="project" value="UniProtKB-KW"/>
</dbReference>
<dbReference type="GO" id="GO:0019843">
    <property type="term" value="F:rRNA binding"/>
    <property type="evidence" value="ECO:0007669"/>
    <property type="project" value="UniProtKB-UniRule"/>
</dbReference>
<dbReference type="GO" id="GO:0003735">
    <property type="term" value="F:structural constituent of ribosome"/>
    <property type="evidence" value="ECO:0007669"/>
    <property type="project" value="InterPro"/>
</dbReference>
<dbReference type="GO" id="GO:0000049">
    <property type="term" value="F:tRNA binding"/>
    <property type="evidence" value="ECO:0007669"/>
    <property type="project" value="UniProtKB-UniRule"/>
</dbReference>
<dbReference type="GO" id="GO:0006412">
    <property type="term" value="P:translation"/>
    <property type="evidence" value="ECO:0007669"/>
    <property type="project" value="UniProtKB-UniRule"/>
</dbReference>
<dbReference type="FunFam" id="3.30.1440.10:FF:000001">
    <property type="entry name" value="50S ribosomal protein L5"/>
    <property type="match status" value="1"/>
</dbReference>
<dbReference type="Gene3D" id="3.30.1440.10">
    <property type="match status" value="1"/>
</dbReference>
<dbReference type="HAMAP" id="MF_01333_B">
    <property type="entry name" value="Ribosomal_uL5_B"/>
    <property type="match status" value="1"/>
</dbReference>
<dbReference type="InterPro" id="IPR002132">
    <property type="entry name" value="Ribosomal_uL5"/>
</dbReference>
<dbReference type="InterPro" id="IPR020930">
    <property type="entry name" value="Ribosomal_uL5_bac-type"/>
</dbReference>
<dbReference type="InterPro" id="IPR031309">
    <property type="entry name" value="Ribosomal_uL5_C"/>
</dbReference>
<dbReference type="InterPro" id="IPR022803">
    <property type="entry name" value="Ribosomal_uL5_dom_sf"/>
</dbReference>
<dbReference type="InterPro" id="IPR031310">
    <property type="entry name" value="Ribosomal_uL5_N"/>
</dbReference>
<dbReference type="NCBIfam" id="NF000585">
    <property type="entry name" value="PRK00010.1"/>
    <property type="match status" value="1"/>
</dbReference>
<dbReference type="PANTHER" id="PTHR11994">
    <property type="entry name" value="60S RIBOSOMAL PROTEIN L11-RELATED"/>
    <property type="match status" value="1"/>
</dbReference>
<dbReference type="Pfam" id="PF00281">
    <property type="entry name" value="Ribosomal_L5"/>
    <property type="match status" value="1"/>
</dbReference>
<dbReference type="Pfam" id="PF00673">
    <property type="entry name" value="Ribosomal_L5_C"/>
    <property type="match status" value="1"/>
</dbReference>
<dbReference type="PIRSF" id="PIRSF002161">
    <property type="entry name" value="Ribosomal_L5"/>
    <property type="match status" value="1"/>
</dbReference>
<dbReference type="SUPFAM" id="SSF55282">
    <property type="entry name" value="RL5-like"/>
    <property type="match status" value="1"/>
</dbReference>
<accession>A4XBN4</accession>
<organism>
    <name type="scientific">Salinispora tropica (strain ATCC BAA-916 / DSM 44818 / JCM 13857 / NBRC 105044 / CNB-440)</name>
    <dbReference type="NCBI Taxonomy" id="369723"/>
    <lineage>
        <taxon>Bacteria</taxon>
        <taxon>Bacillati</taxon>
        <taxon>Actinomycetota</taxon>
        <taxon>Actinomycetes</taxon>
        <taxon>Micromonosporales</taxon>
        <taxon>Micromonosporaceae</taxon>
        <taxon>Salinispora</taxon>
    </lineage>
</organism>
<proteinExistence type="inferred from homology"/>
<evidence type="ECO:0000255" key="1">
    <source>
        <dbReference type="HAMAP-Rule" id="MF_01333"/>
    </source>
</evidence>
<evidence type="ECO:0000305" key="2"/>
<sequence>MTTATETKTMPRLKERYRNEIVGQLREQYQYGNPMQVPGLVKIVVNMGVGEAARDAKLIDGAVRDLATITGQKPQVRRATKSIAQFKLREGMPIGAKVTLRGDRMWEFLDRLLSIALPRIRDFRGLDGRKLDGNGNYTFGLTEQSVFHEIDQDKIDRQRGMDITVVTTATTDDEGRALLKFLGFPFKEN</sequence>